<accession>A8D8X1</accession>
<reference key="1">
    <citation type="submission" date="2007-09" db="EMBL/GenBank/DDBJ databases">
        <title>Electronic cloning of QM gene in sheep.</title>
        <authorList>
            <person name="Yin S.S."/>
            <person name="Wu D.J."/>
        </authorList>
    </citation>
    <scope>NUCLEOTIDE SEQUENCE [MRNA]</scope>
    <source>
        <strain>Liangshan</strain>
    </source>
</reference>
<proteinExistence type="evidence at transcript level"/>
<comment type="function">
    <text evidence="1">Component of the large ribosomal subunit. Plays a role in the formation of actively translating ribosomes. May play a role in the embryonic brain development.</text>
</comment>
<comment type="subunit">
    <text evidence="1">Component of the large ribosomal subunit. Mature ribosomes consist of a small (40S) and a large (60S) subunit. The 40S subunit contains about 33 different proteins and 1 molecule of RNA (18S). The 60S subunit contains about 49 different proteins and 3 molecules of RNA (28S, 5.8S and 5S).</text>
</comment>
<comment type="subcellular location">
    <subcellularLocation>
        <location evidence="2">Cytoplasm</location>
    </subcellularLocation>
</comment>
<comment type="PTM">
    <text evidence="2">Citrullinated by PADI4.</text>
</comment>
<comment type="PTM">
    <text evidence="2">Ufmylated by UFL1.</text>
</comment>
<comment type="similarity">
    <text evidence="3">Belongs to the universal ribosomal protein uL16 family.</text>
</comment>
<organism>
    <name type="scientific">Ovis aries</name>
    <name type="common">Sheep</name>
    <dbReference type="NCBI Taxonomy" id="9940"/>
    <lineage>
        <taxon>Eukaryota</taxon>
        <taxon>Metazoa</taxon>
        <taxon>Chordata</taxon>
        <taxon>Craniata</taxon>
        <taxon>Vertebrata</taxon>
        <taxon>Euteleostomi</taxon>
        <taxon>Mammalia</taxon>
        <taxon>Eutheria</taxon>
        <taxon>Laurasiatheria</taxon>
        <taxon>Artiodactyla</taxon>
        <taxon>Ruminantia</taxon>
        <taxon>Pecora</taxon>
        <taxon>Bovidae</taxon>
        <taxon>Caprinae</taxon>
        <taxon>Ovis</taxon>
    </lineage>
</organism>
<gene>
    <name evidence="1" type="primary">RPL10</name>
    <name type="synonym">QM</name>
</gene>
<protein>
    <recommendedName>
        <fullName evidence="3">Large ribosomal subunit protein uL16</fullName>
    </recommendedName>
    <alternativeName>
        <fullName evidence="3">60S ribosomal protein L10</fullName>
    </alternativeName>
    <alternativeName>
        <fullName>Protein QM homolog</fullName>
    </alternativeName>
    <alternativeName>
        <fullName evidence="1">Ribosomal protein L10</fullName>
    </alternativeName>
</protein>
<dbReference type="EMBL" id="EU143791">
    <property type="protein sequence ID" value="ABV64839.1"/>
    <property type="molecule type" value="mRNA"/>
</dbReference>
<dbReference type="RefSeq" id="NP_001106291.1">
    <property type="nucleotide sequence ID" value="NM_001112820.2"/>
</dbReference>
<dbReference type="RefSeq" id="XP_011962460.1">
    <property type="nucleotide sequence ID" value="XM_012107070.2"/>
</dbReference>
<dbReference type="SMR" id="A8D8X1"/>
<dbReference type="STRING" id="9940.ENSOARP00000005329"/>
<dbReference type="PaxDb" id="9940-ENSOARP00000005329"/>
<dbReference type="GeneID" id="100127215"/>
<dbReference type="KEGG" id="oas:100127215"/>
<dbReference type="CTD" id="6134"/>
<dbReference type="eggNOG" id="KOG0857">
    <property type="taxonomic scope" value="Eukaryota"/>
</dbReference>
<dbReference type="HOGENOM" id="CLU_084051_0_0_1"/>
<dbReference type="OMA" id="HHVIREN"/>
<dbReference type="OrthoDB" id="10258869at2759"/>
<dbReference type="Proteomes" id="UP000002356">
    <property type="component" value="Chromosome X"/>
</dbReference>
<dbReference type="Bgee" id="ENSOARG00000004976">
    <property type="expression patterns" value="Expressed in leukocyte and 52 other cell types or tissues"/>
</dbReference>
<dbReference type="GO" id="GO:0022625">
    <property type="term" value="C:cytosolic large ribosomal subunit"/>
    <property type="evidence" value="ECO:0000250"/>
    <property type="project" value="UniProtKB"/>
</dbReference>
<dbReference type="GO" id="GO:0003735">
    <property type="term" value="F:structural constituent of ribosome"/>
    <property type="evidence" value="ECO:0000250"/>
    <property type="project" value="UniProtKB"/>
</dbReference>
<dbReference type="GO" id="GO:0045182">
    <property type="term" value="F:translation regulator activity"/>
    <property type="evidence" value="ECO:0000250"/>
    <property type="project" value="UniProtKB"/>
</dbReference>
<dbReference type="GO" id="GO:1990403">
    <property type="term" value="P:embryonic brain development"/>
    <property type="evidence" value="ECO:0000250"/>
    <property type="project" value="UniProtKB"/>
</dbReference>
<dbReference type="GO" id="GO:0006417">
    <property type="term" value="P:regulation of translation"/>
    <property type="evidence" value="ECO:0000250"/>
    <property type="project" value="UniProtKB"/>
</dbReference>
<dbReference type="GO" id="GO:0006412">
    <property type="term" value="P:translation"/>
    <property type="evidence" value="ECO:0007669"/>
    <property type="project" value="InterPro"/>
</dbReference>
<dbReference type="CDD" id="cd01433">
    <property type="entry name" value="Ribosomal_L16_L10e"/>
    <property type="match status" value="1"/>
</dbReference>
<dbReference type="FunFam" id="3.30.60.300:FF:000001">
    <property type="entry name" value="60S ribosomal protein L10"/>
    <property type="match status" value="1"/>
</dbReference>
<dbReference type="FunFam" id="3.90.1170.10:FF:000002">
    <property type="entry name" value="60S ribosomal protein L10"/>
    <property type="match status" value="1"/>
</dbReference>
<dbReference type="Gene3D" id="3.30.60.300">
    <property type="match status" value="1"/>
</dbReference>
<dbReference type="Gene3D" id="3.90.1170.10">
    <property type="entry name" value="Ribosomal protein L10e/L16"/>
    <property type="match status" value="1"/>
</dbReference>
<dbReference type="InterPro" id="IPR047873">
    <property type="entry name" value="Ribosomal_uL16"/>
</dbReference>
<dbReference type="InterPro" id="IPR018255">
    <property type="entry name" value="Ribosomal_uL16_CS_euk_arc"/>
</dbReference>
<dbReference type="InterPro" id="IPR016180">
    <property type="entry name" value="Ribosomal_uL16_dom"/>
</dbReference>
<dbReference type="InterPro" id="IPR001197">
    <property type="entry name" value="Ribosomal_uL16_euk_arch"/>
</dbReference>
<dbReference type="InterPro" id="IPR036920">
    <property type="entry name" value="Ribosomal_uL16_sf"/>
</dbReference>
<dbReference type="NCBIfam" id="NF003239">
    <property type="entry name" value="PRK04199.1-4"/>
    <property type="match status" value="1"/>
</dbReference>
<dbReference type="NCBIfam" id="TIGR00279">
    <property type="entry name" value="uL16_euk_arch"/>
    <property type="match status" value="1"/>
</dbReference>
<dbReference type="PANTHER" id="PTHR11726">
    <property type="entry name" value="60S RIBOSOMAL PROTEIN L10"/>
    <property type="match status" value="1"/>
</dbReference>
<dbReference type="Pfam" id="PF00252">
    <property type="entry name" value="Ribosomal_L16"/>
    <property type="match status" value="1"/>
</dbReference>
<dbReference type="PIRSF" id="PIRSF005590">
    <property type="entry name" value="Ribosomal_L10"/>
    <property type="match status" value="1"/>
</dbReference>
<dbReference type="SUPFAM" id="SSF54686">
    <property type="entry name" value="Ribosomal protein L16p/L10e"/>
    <property type="match status" value="1"/>
</dbReference>
<dbReference type="PROSITE" id="PS01257">
    <property type="entry name" value="RIBOSOMAL_L10E"/>
    <property type="match status" value="1"/>
</dbReference>
<evidence type="ECO:0000250" key="1">
    <source>
        <dbReference type="UniProtKB" id="P27635"/>
    </source>
</evidence>
<evidence type="ECO:0000250" key="2">
    <source>
        <dbReference type="UniProtKB" id="Q6ZWV3"/>
    </source>
</evidence>
<evidence type="ECO:0000305" key="3"/>
<keyword id="KW-0164">Citrullination</keyword>
<keyword id="KW-0963">Cytoplasm</keyword>
<keyword id="KW-0217">Developmental protein</keyword>
<keyword id="KW-1017">Isopeptide bond</keyword>
<keyword id="KW-1185">Reference proteome</keyword>
<keyword id="KW-0687">Ribonucleoprotein</keyword>
<keyword id="KW-0689">Ribosomal protein</keyword>
<keyword id="KW-0832">Ubl conjugation</keyword>
<feature type="chain" id="PRO_0000319306" description="Large ribosomal subunit protein uL16">
    <location>
        <begin position="1"/>
        <end position="214"/>
    </location>
</feature>
<feature type="modified residue" description="Citrulline" evidence="2">
    <location>
        <position position="32"/>
    </location>
</feature>
<feature type="cross-link" description="Glycyl lysine isopeptide (Lys-Gly) (interchain with G-Cter in SUMO2)" evidence="1">
    <location>
        <position position="175"/>
    </location>
</feature>
<feature type="cross-link" description="Glycyl lysine isopeptide (Lys-Gly) (interchain with G-Cter in ubiquitin)" evidence="1">
    <location>
        <position position="188"/>
    </location>
</feature>
<name>RL10_SHEEP</name>
<sequence>MGRRPARCYRYCKNKPYPKSRFCRGVPDAKIRIFDLGRKKAKVDEFPLCGHMVSDEYEQLSSEALEAARICANKYMVKSCGKDGFHIRVRLHPFHVIRINKMLSCAGADRLQTGMRGAFGKPQGTVARVHIGQVIMSIRTKLQNKEHVIEALRRAKFKFPGRQKIHISKKWGFTKFNADEFENMVAEKRLIPDGCGVKYIPNRGPLDKWRALHS</sequence>